<evidence type="ECO:0000255" key="1">
    <source>
        <dbReference type="HAMAP-Rule" id="MF_01368"/>
    </source>
</evidence>
<evidence type="ECO:0000256" key="2">
    <source>
        <dbReference type="SAM" id="MobiDB-lite"/>
    </source>
</evidence>
<evidence type="ECO:0000305" key="3"/>
<feature type="chain" id="PRO_1000055904" description="Large ribosomal subunit protein bL17">
    <location>
        <begin position="1"/>
        <end position="145"/>
    </location>
</feature>
<feature type="region of interest" description="Disordered" evidence="2">
    <location>
        <begin position="123"/>
        <end position="145"/>
    </location>
</feature>
<keyword id="KW-1185">Reference proteome</keyword>
<keyword id="KW-0687">Ribonucleoprotein</keyword>
<keyword id="KW-0689">Ribosomal protein</keyword>
<dbReference type="EMBL" id="CP000084">
    <property type="protein sequence ID" value="AAZ21896.1"/>
    <property type="molecule type" value="Genomic_DNA"/>
</dbReference>
<dbReference type="RefSeq" id="WP_006996835.1">
    <property type="nucleotide sequence ID" value="NC_007205.1"/>
</dbReference>
<dbReference type="SMR" id="Q4FLP2"/>
<dbReference type="STRING" id="335992.SAR11_1092"/>
<dbReference type="GeneID" id="66295582"/>
<dbReference type="KEGG" id="pub:SAR11_1092"/>
<dbReference type="eggNOG" id="COG0203">
    <property type="taxonomic scope" value="Bacteria"/>
</dbReference>
<dbReference type="HOGENOM" id="CLU_074407_2_0_5"/>
<dbReference type="OrthoDB" id="9809073at2"/>
<dbReference type="Proteomes" id="UP000002528">
    <property type="component" value="Chromosome"/>
</dbReference>
<dbReference type="GO" id="GO:0022625">
    <property type="term" value="C:cytosolic large ribosomal subunit"/>
    <property type="evidence" value="ECO:0007669"/>
    <property type="project" value="TreeGrafter"/>
</dbReference>
<dbReference type="GO" id="GO:0003735">
    <property type="term" value="F:structural constituent of ribosome"/>
    <property type="evidence" value="ECO:0007669"/>
    <property type="project" value="InterPro"/>
</dbReference>
<dbReference type="GO" id="GO:0006412">
    <property type="term" value="P:translation"/>
    <property type="evidence" value="ECO:0007669"/>
    <property type="project" value="UniProtKB-UniRule"/>
</dbReference>
<dbReference type="Gene3D" id="3.90.1030.10">
    <property type="entry name" value="Ribosomal protein L17"/>
    <property type="match status" value="1"/>
</dbReference>
<dbReference type="HAMAP" id="MF_01368">
    <property type="entry name" value="Ribosomal_bL17"/>
    <property type="match status" value="1"/>
</dbReference>
<dbReference type="InterPro" id="IPR000456">
    <property type="entry name" value="Ribosomal_bL17"/>
</dbReference>
<dbReference type="InterPro" id="IPR047859">
    <property type="entry name" value="Ribosomal_bL17_CS"/>
</dbReference>
<dbReference type="InterPro" id="IPR036373">
    <property type="entry name" value="Ribosomal_bL17_sf"/>
</dbReference>
<dbReference type="NCBIfam" id="TIGR00059">
    <property type="entry name" value="L17"/>
    <property type="match status" value="1"/>
</dbReference>
<dbReference type="PANTHER" id="PTHR14413:SF16">
    <property type="entry name" value="LARGE RIBOSOMAL SUBUNIT PROTEIN BL17M"/>
    <property type="match status" value="1"/>
</dbReference>
<dbReference type="PANTHER" id="PTHR14413">
    <property type="entry name" value="RIBOSOMAL PROTEIN L17"/>
    <property type="match status" value="1"/>
</dbReference>
<dbReference type="Pfam" id="PF01196">
    <property type="entry name" value="Ribosomal_L17"/>
    <property type="match status" value="1"/>
</dbReference>
<dbReference type="SUPFAM" id="SSF64263">
    <property type="entry name" value="Prokaryotic ribosomal protein L17"/>
    <property type="match status" value="1"/>
</dbReference>
<dbReference type="PROSITE" id="PS01167">
    <property type="entry name" value="RIBOSOMAL_L17"/>
    <property type="match status" value="1"/>
</dbReference>
<sequence length="145" mass="16610">MRHGMANKKLNRTSEHRKALLKNMLNSLIKYEQITTTLPKAKFLKPQADKIITLGKKETLQTTKMLMSKLQDITSANKVKKTLSKRYEARNGGYTRIIKAGFRYGDNAPMAVIEFVDRDVEAKRVDRKKKDPAKDKTEEKKLATA</sequence>
<accession>Q4FLP2</accession>
<gene>
    <name evidence="1" type="primary">rplQ</name>
    <name type="ordered locus">SAR11_1092</name>
</gene>
<proteinExistence type="inferred from homology"/>
<comment type="subunit">
    <text evidence="1">Part of the 50S ribosomal subunit. Contacts protein L32.</text>
</comment>
<comment type="similarity">
    <text evidence="1">Belongs to the bacterial ribosomal protein bL17 family.</text>
</comment>
<reference key="1">
    <citation type="journal article" date="2005" name="Science">
        <title>Genome streamlining in a cosmopolitan oceanic bacterium.</title>
        <authorList>
            <person name="Giovannoni S.J."/>
            <person name="Tripp H.J."/>
            <person name="Givan S."/>
            <person name="Podar M."/>
            <person name="Vergin K.L."/>
            <person name="Baptista D."/>
            <person name="Bibbs L."/>
            <person name="Eads J."/>
            <person name="Richardson T.H."/>
            <person name="Noordewier M."/>
            <person name="Rappe M.S."/>
            <person name="Short J.M."/>
            <person name="Carrington J.C."/>
            <person name="Mathur E.J."/>
        </authorList>
    </citation>
    <scope>NUCLEOTIDE SEQUENCE [LARGE SCALE GENOMIC DNA]</scope>
    <source>
        <strain>HTCC1062</strain>
    </source>
</reference>
<name>RL17_PELUB</name>
<organism>
    <name type="scientific">Pelagibacter ubique (strain HTCC1062)</name>
    <dbReference type="NCBI Taxonomy" id="335992"/>
    <lineage>
        <taxon>Bacteria</taxon>
        <taxon>Pseudomonadati</taxon>
        <taxon>Pseudomonadota</taxon>
        <taxon>Alphaproteobacteria</taxon>
        <taxon>Candidatus Pelagibacterales</taxon>
        <taxon>Candidatus Pelagibacteraceae</taxon>
        <taxon>Candidatus Pelagibacter</taxon>
    </lineage>
</organism>
<protein>
    <recommendedName>
        <fullName evidence="1">Large ribosomal subunit protein bL17</fullName>
    </recommendedName>
    <alternativeName>
        <fullName evidence="3">50S ribosomal protein L17</fullName>
    </alternativeName>
</protein>